<accession>Q1CDU2</accession>
<accession>D1Q1I7</accession>
<protein>
    <recommendedName>
        <fullName evidence="1">3-dehydroquinate dehydratase</fullName>
        <shortName evidence="1">3-dehydroquinase</shortName>
        <ecNumber evidence="1">4.2.1.10</ecNumber>
    </recommendedName>
    <alternativeName>
        <fullName evidence="1">Type II DHQase</fullName>
    </alternativeName>
</protein>
<evidence type="ECO:0000255" key="1">
    <source>
        <dbReference type="HAMAP-Rule" id="MF_00169"/>
    </source>
</evidence>
<dbReference type="EC" id="4.2.1.10" evidence="1"/>
<dbReference type="EMBL" id="CP000305">
    <property type="protein sequence ID" value="ABG19838.1"/>
    <property type="molecule type" value="Genomic_DNA"/>
</dbReference>
<dbReference type="EMBL" id="ACNQ01000019">
    <property type="protein sequence ID" value="EEO74390.1"/>
    <property type="molecule type" value="Genomic_DNA"/>
</dbReference>
<dbReference type="RefSeq" id="WP_002210071.1">
    <property type="nucleotide sequence ID" value="NZ_ACNQ01000019.1"/>
</dbReference>
<dbReference type="SMR" id="Q1CDU2"/>
<dbReference type="GeneID" id="57975085"/>
<dbReference type="KEGG" id="ypn:YPN_3511"/>
<dbReference type="HOGENOM" id="CLU_090968_1_0_6"/>
<dbReference type="UniPathway" id="UPA00053">
    <property type="reaction ID" value="UER00086"/>
</dbReference>
<dbReference type="Proteomes" id="UP000008936">
    <property type="component" value="Chromosome"/>
</dbReference>
<dbReference type="GO" id="GO:0003855">
    <property type="term" value="F:3-dehydroquinate dehydratase activity"/>
    <property type="evidence" value="ECO:0007669"/>
    <property type="project" value="UniProtKB-UniRule"/>
</dbReference>
<dbReference type="GO" id="GO:0008652">
    <property type="term" value="P:amino acid biosynthetic process"/>
    <property type="evidence" value="ECO:0007669"/>
    <property type="project" value="UniProtKB-KW"/>
</dbReference>
<dbReference type="GO" id="GO:0009073">
    <property type="term" value="P:aromatic amino acid family biosynthetic process"/>
    <property type="evidence" value="ECO:0007669"/>
    <property type="project" value="UniProtKB-KW"/>
</dbReference>
<dbReference type="GO" id="GO:0009423">
    <property type="term" value="P:chorismate biosynthetic process"/>
    <property type="evidence" value="ECO:0007669"/>
    <property type="project" value="UniProtKB-UniRule"/>
</dbReference>
<dbReference type="GO" id="GO:0019631">
    <property type="term" value="P:quinate catabolic process"/>
    <property type="evidence" value="ECO:0007669"/>
    <property type="project" value="TreeGrafter"/>
</dbReference>
<dbReference type="CDD" id="cd00466">
    <property type="entry name" value="DHQase_II"/>
    <property type="match status" value="1"/>
</dbReference>
<dbReference type="Gene3D" id="3.40.50.9100">
    <property type="entry name" value="Dehydroquinase, class II"/>
    <property type="match status" value="1"/>
</dbReference>
<dbReference type="HAMAP" id="MF_00169">
    <property type="entry name" value="AroQ"/>
    <property type="match status" value="1"/>
</dbReference>
<dbReference type="InterPro" id="IPR001874">
    <property type="entry name" value="DHquinase_II"/>
</dbReference>
<dbReference type="InterPro" id="IPR018509">
    <property type="entry name" value="DHquinase_II_CS"/>
</dbReference>
<dbReference type="InterPro" id="IPR036441">
    <property type="entry name" value="DHquinase_II_sf"/>
</dbReference>
<dbReference type="NCBIfam" id="TIGR01088">
    <property type="entry name" value="aroQ"/>
    <property type="match status" value="1"/>
</dbReference>
<dbReference type="NCBIfam" id="NF003804">
    <property type="entry name" value="PRK05395.1-1"/>
    <property type="match status" value="1"/>
</dbReference>
<dbReference type="NCBIfam" id="NF003805">
    <property type="entry name" value="PRK05395.1-2"/>
    <property type="match status" value="1"/>
</dbReference>
<dbReference type="NCBIfam" id="NF003806">
    <property type="entry name" value="PRK05395.1-3"/>
    <property type="match status" value="1"/>
</dbReference>
<dbReference type="NCBIfam" id="NF003807">
    <property type="entry name" value="PRK05395.1-4"/>
    <property type="match status" value="1"/>
</dbReference>
<dbReference type="PANTHER" id="PTHR21272">
    <property type="entry name" value="CATABOLIC 3-DEHYDROQUINASE"/>
    <property type="match status" value="1"/>
</dbReference>
<dbReference type="PANTHER" id="PTHR21272:SF3">
    <property type="entry name" value="CATABOLIC 3-DEHYDROQUINASE"/>
    <property type="match status" value="1"/>
</dbReference>
<dbReference type="Pfam" id="PF01220">
    <property type="entry name" value="DHquinase_II"/>
    <property type="match status" value="1"/>
</dbReference>
<dbReference type="PIRSF" id="PIRSF001399">
    <property type="entry name" value="DHquinase_II"/>
    <property type="match status" value="1"/>
</dbReference>
<dbReference type="SUPFAM" id="SSF52304">
    <property type="entry name" value="Type II 3-dehydroquinate dehydratase"/>
    <property type="match status" value="1"/>
</dbReference>
<dbReference type="PROSITE" id="PS01029">
    <property type="entry name" value="DEHYDROQUINASE_II"/>
    <property type="match status" value="1"/>
</dbReference>
<sequence>MSDKFHILLLNGPNLNLLGTREPEKYGYTTLAEIVSQLEIQAQGMDVALSHLQSNAEHALIDSIHQARGNTDFILINPAAFTHTSVALRDALLGVQIPFIEIHLSNVHAREPFRHHSYLSDIAVGVICGLGADGYNFALQAAVNRLSKSN</sequence>
<reference key="1">
    <citation type="journal article" date="2006" name="J. Bacteriol.">
        <title>Complete genome sequence of Yersinia pestis strains Antiqua and Nepal516: evidence of gene reduction in an emerging pathogen.</title>
        <authorList>
            <person name="Chain P.S.G."/>
            <person name="Hu P."/>
            <person name="Malfatti S.A."/>
            <person name="Radnedge L."/>
            <person name="Larimer F."/>
            <person name="Vergez L.M."/>
            <person name="Worsham P."/>
            <person name="Chu M.C."/>
            <person name="Andersen G.L."/>
        </authorList>
    </citation>
    <scope>NUCLEOTIDE SEQUENCE [LARGE SCALE GENOMIC DNA]</scope>
    <source>
        <strain>Nepal516</strain>
    </source>
</reference>
<reference key="2">
    <citation type="submission" date="2009-04" db="EMBL/GenBank/DDBJ databases">
        <title>Yersinia pestis Nepal516A whole genome shotgun sequencing project.</title>
        <authorList>
            <person name="Plunkett G. III"/>
            <person name="Anderson B.D."/>
            <person name="Baumler D.J."/>
            <person name="Burland V."/>
            <person name="Cabot E.L."/>
            <person name="Glasner J.D."/>
            <person name="Mau B."/>
            <person name="Neeno-Eckwall E."/>
            <person name="Perna N.T."/>
            <person name="Munk A.C."/>
            <person name="Tapia R."/>
            <person name="Green L.D."/>
            <person name="Rogers Y.C."/>
            <person name="Detter J.C."/>
            <person name="Bruce D.C."/>
            <person name="Brettin T.S."/>
        </authorList>
    </citation>
    <scope>NUCLEOTIDE SEQUENCE [LARGE SCALE GENOMIC DNA]</scope>
    <source>
        <strain>Nepal516</strain>
    </source>
</reference>
<feature type="chain" id="PRO_1000023536" description="3-dehydroquinate dehydratase">
    <location>
        <begin position="1"/>
        <end position="150"/>
    </location>
</feature>
<feature type="active site" description="Proton acceptor" evidence="1">
    <location>
        <position position="26"/>
    </location>
</feature>
<feature type="active site" description="Proton donor" evidence="1">
    <location>
        <position position="103"/>
    </location>
</feature>
<feature type="binding site" evidence="1">
    <location>
        <position position="77"/>
    </location>
    <ligand>
        <name>substrate</name>
    </ligand>
</feature>
<feature type="binding site" evidence="1">
    <location>
        <position position="83"/>
    </location>
    <ligand>
        <name>substrate</name>
    </ligand>
</feature>
<feature type="binding site" evidence="1">
    <location>
        <position position="90"/>
    </location>
    <ligand>
        <name>substrate</name>
    </ligand>
</feature>
<feature type="binding site" evidence="1">
    <location>
        <begin position="104"/>
        <end position="105"/>
    </location>
    <ligand>
        <name>substrate</name>
    </ligand>
</feature>
<feature type="binding site" evidence="1">
    <location>
        <position position="114"/>
    </location>
    <ligand>
        <name>substrate</name>
    </ligand>
</feature>
<feature type="site" description="Transition state stabilizer" evidence="1">
    <location>
        <position position="21"/>
    </location>
</feature>
<proteinExistence type="inferred from homology"/>
<name>AROQ_YERPN</name>
<comment type="function">
    <text evidence="1">Catalyzes a trans-dehydration via an enolate intermediate.</text>
</comment>
<comment type="catalytic activity">
    <reaction evidence="1">
        <text>3-dehydroquinate = 3-dehydroshikimate + H2O</text>
        <dbReference type="Rhea" id="RHEA:21096"/>
        <dbReference type="ChEBI" id="CHEBI:15377"/>
        <dbReference type="ChEBI" id="CHEBI:16630"/>
        <dbReference type="ChEBI" id="CHEBI:32364"/>
        <dbReference type="EC" id="4.2.1.10"/>
    </reaction>
</comment>
<comment type="pathway">
    <text evidence="1">Metabolic intermediate biosynthesis; chorismate biosynthesis; chorismate from D-erythrose 4-phosphate and phosphoenolpyruvate: step 3/7.</text>
</comment>
<comment type="subunit">
    <text evidence="1">Homododecamer.</text>
</comment>
<comment type="similarity">
    <text evidence="1">Belongs to the type-II 3-dehydroquinase family.</text>
</comment>
<keyword id="KW-0028">Amino-acid biosynthesis</keyword>
<keyword id="KW-0057">Aromatic amino acid biosynthesis</keyword>
<keyword id="KW-0456">Lyase</keyword>
<organism>
    <name type="scientific">Yersinia pestis bv. Antiqua (strain Nepal516)</name>
    <dbReference type="NCBI Taxonomy" id="377628"/>
    <lineage>
        <taxon>Bacteria</taxon>
        <taxon>Pseudomonadati</taxon>
        <taxon>Pseudomonadota</taxon>
        <taxon>Gammaproteobacteria</taxon>
        <taxon>Enterobacterales</taxon>
        <taxon>Yersiniaceae</taxon>
        <taxon>Yersinia</taxon>
    </lineage>
</organism>
<gene>
    <name evidence="1" type="primary">aroQ</name>
    <name type="ordered locus">YPN_3511</name>
    <name type="ORF">YP516_3986</name>
</gene>